<proteinExistence type="evidence at protein level"/>
<feature type="chain" id="PRO_0000147126" description="Large ribosomal subunit protein uL16">
    <location>
        <begin position="1"/>
        <end position="219"/>
    </location>
</feature>
<reference key="1">
    <citation type="journal article" date="2001" name="Nature">
        <title>Genome sequence and gene compaction of the eukaryote parasite Encephalitozoon cuniculi.</title>
        <authorList>
            <person name="Katinka M.D."/>
            <person name="Duprat S."/>
            <person name="Cornillot E."/>
            <person name="Metenier G."/>
            <person name="Thomarat F."/>
            <person name="Prensier G."/>
            <person name="Barbe V."/>
            <person name="Peyretaillade E."/>
            <person name="Brottier P."/>
            <person name="Wincker P."/>
            <person name="Delbac F."/>
            <person name="El Alaoui H."/>
            <person name="Peyret P."/>
            <person name="Saurin W."/>
            <person name="Gouy M."/>
            <person name="Weissenbach J."/>
            <person name="Vivares C.P."/>
        </authorList>
    </citation>
    <scope>NUCLEOTIDE SEQUENCE [LARGE SCALE GENOMIC DNA]</scope>
    <source>
        <strain>GB-M1</strain>
    </source>
</reference>
<reference key="2">
    <citation type="journal article" date="2006" name="Proteomics">
        <title>Proteomic analysis of the eukaryotic parasite Encephalitozoon cuniculi (microsporidia): a reference map for proteins expressed in late sporogonial stages.</title>
        <authorList>
            <person name="Brosson D."/>
            <person name="Kuhn L."/>
            <person name="Delbac F."/>
            <person name="Garin J."/>
            <person name="Vivares C.P."/>
            <person name="Texier C."/>
        </authorList>
    </citation>
    <scope>IDENTIFICATION BY MASS SPECTROMETRY [LARGE SCALE ANALYSIS]</scope>
    <scope>DEVELOPMENTAL STAGE</scope>
</reference>
<comment type="subunit">
    <text evidence="1">Component of the small ribosomal subunit. Mature ribosomes consist of a small (40S) and a large (60S) subunit. The 40S subunit contains about 33 different proteins and 1 molecule of RNA (18S). The 60S subunit contains about 49 different proteins and 3 molecules of RNA (25S, 5.8S and 5S) (By similarity).</text>
</comment>
<comment type="developmental stage">
    <text evidence="2">Expressed in late sporogonial stages.</text>
</comment>
<comment type="similarity">
    <text evidence="3">Belongs to the universal ribosomal protein uL16 family.</text>
</comment>
<name>RL10_ENCCU</name>
<organism>
    <name type="scientific">Encephalitozoon cuniculi (strain GB-M1)</name>
    <name type="common">Microsporidian parasite</name>
    <dbReference type="NCBI Taxonomy" id="284813"/>
    <lineage>
        <taxon>Eukaryota</taxon>
        <taxon>Fungi</taxon>
        <taxon>Fungi incertae sedis</taxon>
        <taxon>Microsporidia</taxon>
        <taxon>Unikaryonidae</taxon>
        <taxon>Encephalitozoon</taxon>
    </lineage>
</organism>
<accession>Q8SR96</accession>
<evidence type="ECO:0000250" key="1"/>
<evidence type="ECO:0000269" key="2">
    <source>
    </source>
</evidence>
<evidence type="ECO:0000305" key="3"/>
<gene>
    <name type="primary">RPL10</name>
    <name type="ordered locus">ECU08_1570</name>
</gene>
<protein>
    <recommendedName>
        <fullName evidence="3">Large ribosomal subunit protein uL16</fullName>
    </recommendedName>
    <alternativeName>
        <fullName>60S ribosomal protein L10</fullName>
    </alternativeName>
</protein>
<sequence length="219" mass="24999">MGRRPGRCYRYLSKKAYPKSRFNRGVPDSKIQIFDLGRRKAGVLEFPLLVNCISNERENLSAEALEAARICANKYMVKHAGKDNFHLRIRVYPFHVLRINKMLSCAGADRLQTGMRGSFGKPYGRAARVVFNQPILSIRTKESFRDAAVEALRRAKNKFPGHQKIQVSSKFGFTNMFSDEFNKLNESGRIILRGGSFSVIREKGSIDKFKRDLEYAANN</sequence>
<dbReference type="EMBL" id="AL590448">
    <property type="protein sequence ID" value="CAD26461.1"/>
    <property type="molecule type" value="Genomic_DNA"/>
</dbReference>
<dbReference type="RefSeq" id="NP_597285.1">
    <property type="nucleotide sequence ID" value="NM_001041894.1"/>
</dbReference>
<dbReference type="PDB" id="7QEP">
    <property type="method" value="EM"/>
    <property type="resolution" value="2.70 A"/>
    <property type="chains" value="M0=1-219"/>
</dbReference>
<dbReference type="PDBsum" id="7QEP"/>
<dbReference type="EMDB" id="EMD-13936"/>
<dbReference type="SMR" id="Q8SR96"/>
<dbReference type="FunCoup" id="Q8SR96">
    <property type="interactions" value="145"/>
</dbReference>
<dbReference type="STRING" id="284813.Q8SR96"/>
<dbReference type="GeneID" id="859707"/>
<dbReference type="KEGG" id="ecu:ECU08_1570"/>
<dbReference type="VEuPathDB" id="MicrosporidiaDB:ECU08_1570"/>
<dbReference type="HOGENOM" id="CLU_084051_0_0_1"/>
<dbReference type="InParanoid" id="Q8SR96"/>
<dbReference type="OMA" id="HHVIREN"/>
<dbReference type="OrthoDB" id="10258869at2759"/>
<dbReference type="Proteomes" id="UP000000819">
    <property type="component" value="Chromosome VIII"/>
</dbReference>
<dbReference type="GO" id="GO:1990904">
    <property type="term" value="C:ribonucleoprotein complex"/>
    <property type="evidence" value="ECO:0007669"/>
    <property type="project" value="UniProtKB-KW"/>
</dbReference>
<dbReference type="GO" id="GO:0005840">
    <property type="term" value="C:ribosome"/>
    <property type="evidence" value="ECO:0007669"/>
    <property type="project" value="UniProtKB-KW"/>
</dbReference>
<dbReference type="GO" id="GO:0003735">
    <property type="term" value="F:structural constituent of ribosome"/>
    <property type="evidence" value="ECO:0007669"/>
    <property type="project" value="InterPro"/>
</dbReference>
<dbReference type="GO" id="GO:0006412">
    <property type="term" value="P:translation"/>
    <property type="evidence" value="ECO:0007669"/>
    <property type="project" value="InterPro"/>
</dbReference>
<dbReference type="CDD" id="cd01433">
    <property type="entry name" value="Ribosomal_L16_L10e"/>
    <property type="match status" value="1"/>
</dbReference>
<dbReference type="FunFam" id="3.90.1170.10:FF:000002">
    <property type="entry name" value="60S ribosomal protein L10"/>
    <property type="match status" value="1"/>
</dbReference>
<dbReference type="Gene3D" id="3.90.1170.10">
    <property type="entry name" value="Ribosomal protein L10e/L16"/>
    <property type="match status" value="1"/>
</dbReference>
<dbReference type="InterPro" id="IPR047873">
    <property type="entry name" value="Ribosomal_uL16"/>
</dbReference>
<dbReference type="InterPro" id="IPR018255">
    <property type="entry name" value="Ribosomal_uL16_CS_euk_arc"/>
</dbReference>
<dbReference type="InterPro" id="IPR016180">
    <property type="entry name" value="Ribosomal_uL16_dom"/>
</dbReference>
<dbReference type="InterPro" id="IPR001197">
    <property type="entry name" value="Ribosomal_uL16_euk_arch"/>
</dbReference>
<dbReference type="InterPro" id="IPR036920">
    <property type="entry name" value="Ribosomal_uL16_sf"/>
</dbReference>
<dbReference type="NCBIfam" id="NF003239">
    <property type="entry name" value="PRK04199.1-4"/>
    <property type="match status" value="1"/>
</dbReference>
<dbReference type="NCBIfam" id="TIGR00279">
    <property type="entry name" value="uL16_euk_arch"/>
    <property type="match status" value="1"/>
</dbReference>
<dbReference type="PANTHER" id="PTHR11726">
    <property type="entry name" value="60S RIBOSOMAL PROTEIN L10"/>
    <property type="match status" value="1"/>
</dbReference>
<dbReference type="Pfam" id="PF00252">
    <property type="entry name" value="Ribosomal_L16"/>
    <property type="match status" value="1"/>
</dbReference>
<dbReference type="PIRSF" id="PIRSF005590">
    <property type="entry name" value="Ribosomal_L10"/>
    <property type="match status" value="1"/>
</dbReference>
<dbReference type="SUPFAM" id="SSF54686">
    <property type="entry name" value="Ribosomal protein L16p/L10e"/>
    <property type="match status" value="1"/>
</dbReference>
<dbReference type="PROSITE" id="PS01257">
    <property type="entry name" value="RIBOSOMAL_L10E"/>
    <property type="match status" value="1"/>
</dbReference>
<keyword id="KW-0002">3D-structure</keyword>
<keyword id="KW-1185">Reference proteome</keyword>
<keyword id="KW-0687">Ribonucleoprotein</keyword>
<keyword id="KW-0689">Ribosomal protein</keyword>